<organism>
    <name type="scientific">Streptomyces coelicolor (strain ATCC BAA-471 / A3(2) / M145)</name>
    <dbReference type="NCBI Taxonomy" id="100226"/>
    <lineage>
        <taxon>Bacteria</taxon>
        <taxon>Bacillati</taxon>
        <taxon>Actinomycetota</taxon>
        <taxon>Actinomycetes</taxon>
        <taxon>Kitasatosporales</taxon>
        <taxon>Streptomycetaceae</taxon>
        <taxon>Streptomyces</taxon>
        <taxon>Streptomyces albidoflavus group</taxon>
    </lineage>
</organism>
<keyword id="KW-0028">Amino-acid biosynthesis</keyword>
<keyword id="KW-0963">Cytoplasm</keyword>
<keyword id="KW-0368">Histidine biosynthesis</keyword>
<keyword id="KW-0378">Hydrolase</keyword>
<keyword id="KW-0460">Magnesium</keyword>
<keyword id="KW-0479">Metal-binding</keyword>
<keyword id="KW-1185">Reference proteome</keyword>
<keyword id="KW-0862">Zinc</keyword>
<accession>Q9S2U1</accession>
<gene>
    <name evidence="1" type="primary">hisI</name>
    <name type="ordered locus">SCO2044</name>
    <name type="ORF">SC4G6.13c</name>
</gene>
<comment type="function">
    <text evidence="1">Catalyzes the hydrolysis of the adenine ring of phosphoribosyl-AMP.</text>
</comment>
<comment type="catalytic activity">
    <reaction evidence="1">
        <text>1-(5-phospho-beta-D-ribosyl)-5'-AMP + H2O = 1-(5-phospho-beta-D-ribosyl)-5-[(5-phospho-beta-D-ribosylamino)methylideneamino]imidazole-4-carboxamide</text>
        <dbReference type="Rhea" id="RHEA:20049"/>
        <dbReference type="ChEBI" id="CHEBI:15377"/>
        <dbReference type="ChEBI" id="CHEBI:58435"/>
        <dbReference type="ChEBI" id="CHEBI:59457"/>
        <dbReference type="EC" id="3.5.4.19"/>
    </reaction>
</comment>
<comment type="cofactor">
    <cofactor evidence="1">
        <name>Mg(2+)</name>
        <dbReference type="ChEBI" id="CHEBI:18420"/>
    </cofactor>
    <text evidence="1">Binds 1 Mg(2+) ion per subunit.</text>
</comment>
<comment type="cofactor">
    <cofactor evidence="1">
        <name>Zn(2+)</name>
        <dbReference type="ChEBI" id="CHEBI:29105"/>
    </cofactor>
    <text evidence="1">Binds 1 zinc ion per subunit.</text>
</comment>
<comment type="pathway">
    <text evidence="1">Amino-acid biosynthesis; L-histidine biosynthesis; L-histidine from 5-phospho-alpha-D-ribose 1-diphosphate: step 3/9.</text>
</comment>
<comment type="subunit">
    <text evidence="1">Homodimer.</text>
</comment>
<comment type="subcellular location">
    <subcellularLocation>
        <location evidence="1">Cytoplasm</location>
    </subcellularLocation>
</comment>
<comment type="similarity">
    <text evidence="1">Belongs to the PRA-CH family.</text>
</comment>
<protein>
    <recommendedName>
        <fullName evidence="1">Phosphoribosyl-AMP cyclohydrolase</fullName>
        <shortName evidence="1">PRA-CH</shortName>
        <ecNumber evidence="1">3.5.4.19</ecNumber>
    </recommendedName>
</protein>
<evidence type="ECO:0000255" key="1">
    <source>
        <dbReference type="HAMAP-Rule" id="MF_01021"/>
    </source>
</evidence>
<feature type="chain" id="PRO_0000136501" description="Phosphoribosyl-AMP cyclohydrolase">
    <location>
        <begin position="1"/>
        <end position="128"/>
    </location>
</feature>
<feature type="binding site" evidence="1">
    <location>
        <position position="94"/>
    </location>
    <ligand>
        <name>Mg(2+)</name>
        <dbReference type="ChEBI" id="CHEBI:18420"/>
    </ligand>
</feature>
<feature type="binding site" evidence="1">
    <location>
        <position position="95"/>
    </location>
    <ligand>
        <name>Zn(2+)</name>
        <dbReference type="ChEBI" id="CHEBI:29105"/>
        <note>ligand shared between dimeric partners</note>
    </ligand>
</feature>
<feature type="binding site" evidence="1">
    <location>
        <position position="96"/>
    </location>
    <ligand>
        <name>Mg(2+)</name>
        <dbReference type="ChEBI" id="CHEBI:18420"/>
    </ligand>
</feature>
<feature type="binding site" evidence="1">
    <location>
        <position position="98"/>
    </location>
    <ligand>
        <name>Mg(2+)</name>
        <dbReference type="ChEBI" id="CHEBI:18420"/>
    </ligand>
</feature>
<feature type="binding site" evidence="1">
    <location>
        <position position="111"/>
    </location>
    <ligand>
        <name>Zn(2+)</name>
        <dbReference type="ChEBI" id="CHEBI:29105"/>
        <note>ligand shared between dimeric partners</note>
    </ligand>
</feature>
<feature type="binding site" evidence="1">
    <location>
        <position position="118"/>
    </location>
    <ligand>
        <name>Zn(2+)</name>
        <dbReference type="ChEBI" id="CHEBI:29105"/>
        <note>ligand shared between dimeric partners</note>
    </ligand>
</feature>
<sequence length="128" mass="13834">MTSSSPTGGGPGRPSALAPEIADRLKRSADGLLPAIAQQYDTGEVLMLGWMDDEALHRTLTTGRCTYWSRSRGEYWVKGDTSGHFQWVKSVALDCDADTVLVKVDQVGAACHTGTRTCFDTDVLLADQ</sequence>
<name>HIS3_STRCO</name>
<reference key="1">
    <citation type="journal article" date="2002" name="Nature">
        <title>Complete genome sequence of the model actinomycete Streptomyces coelicolor A3(2).</title>
        <authorList>
            <person name="Bentley S.D."/>
            <person name="Chater K.F."/>
            <person name="Cerdeno-Tarraga A.-M."/>
            <person name="Challis G.L."/>
            <person name="Thomson N.R."/>
            <person name="James K.D."/>
            <person name="Harris D.E."/>
            <person name="Quail M.A."/>
            <person name="Kieser H."/>
            <person name="Harper D."/>
            <person name="Bateman A."/>
            <person name="Brown S."/>
            <person name="Chandra G."/>
            <person name="Chen C.W."/>
            <person name="Collins M."/>
            <person name="Cronin A."/>
            <person name="Fraser A."/>
            <person name="Goble A."/>
            <person name="Hidalgo J."/>
            <person name="Hornsby T."/>
            <person name="Howarth S."/>
            <person name="Huang C.-H."/>
            <person name="Kieser T."/>
            <person name="Larke L."/>
            <person name="Murphy L.D."/>
            <person name="Oliver K."/>
            <person name="O'Neil S."/>
            <person name="Rabbinowitsch E."/>
            <person name="Rajandream M.A."/>
            <person name="Rutherford K.M."/>
            <person name="Rutter S."/>
            <person name="Seeger K."/>
            <person name="Saunders D."/>
            <person name="Sharp S."/>
            <person name="Squares R."/>
            <person name="Squares S."/>
            <person name="Taylor K."/>
            <person name="Warren T."/>
            <person name="Wietzorrek A."/>
            <person name="Woodward J.R."/>
            <person name="Barrell B.G."/>
            <person name="Parkhill J."/>
            <person name="Hopwood D.A."/>
        </authorList>
    </citation>
    <scope>NUCLEOTIDE SEQUENCE [LARGE SCALE GENOMIC DNA]</scope>
    <source>
        <strain>ATCC BAA-471 / A3(2) / M145</strain>
    </source>
</reference>
<proteinExistence type="inferred from homology"/>
<dbReference type="EC" id="3.5.4.19" evidence="1"/>
<dbReference type="EMBL" id="AL939111">
    <property type="protein sequence ID" value="CAB51436.1"/>
    <property type="molecule type" value="Genomic_DNA"/>
</dbReference>
<dbReference type="PIR" id="T35073">
    <property type="entry name" value="T35073"/>
</dbReference>
<dbReference type="RefSeq" id="NP_626304.1">
    <property type="nucleotide sequence ID" value="NC_003888.3"/>
</dbReference>
<dbReference type="RefSeq" id="WP_003976772.1">
    <property type="nucleotide sequence ID" value="NZ_VNID01000001.1"/>
</dbReference>
<dbReference type="SMR" id="Q9S2U1"/>
<dbReference type="FunCoup" id="Q9S2U1">
    <property type="interactions" value="109"/>
</dbReference>
<dbReference type="STRING" id="100226.gene:17759642"/>
<dbReference type="PaxDb" id="100226-SCO2044"/>
<dbReference type="GeneID" id="91386963"/>
<dbReference type="KEGG" id="sco:SCO2044"/>
<dbReference type="PATRIC" id="fig|100226.15.peg.2075"/>
<dbReference type="eggNOG" id="COG0139">
    <property type="taxonomic scope" value="Bacteria"/>
</dbReference>
<dbReference type="HOGENOM" id="CLU_048577_5_1_11"/>
<dbReference type="InParanoid" id="Q9S2U1"/>
<dbReference type="OrthoDB" id="9795769at2"/>
<dbReference type="PhylomeDB" id="Q9S2U1"/>
<dbReference type="UniPathway" id="UPA00031">
    <property type="reaction ID" value="UER00008"/>
</dbReference>
<dbReference type="Proteomes" id="UP000001973">
    <property type="component" value="Chromosome"/>
</dbReference>
<dbReference type="GO" id="GO:0005737">
    <property type="term" value="C:cytoplasm"/>
    <property type="evidence" value="ECO:0007669"/>
    <property type="project" value="UniProtKB-SubCell"/>
</dbReference>
<dbReference type="GO" id="GO:0000287">
    <property type="term" value="F:magnesium ion binding"/>
    <property type="evidence" value="ECO:0007669"/>
    <property type="project" value="UniProtKB-UniRule"/>
</dbReference>
<dbReference type="GO" id="GO:0004635">
    <property type="term" value="F:phosphoribosyl-AMP cyclohydrolase activity"/>
    <property type="evidence" value="ECO:0007669"/>
    <property type="project" value="UniProtKB-UniRule"/>
</dbReference>
<dbReference type="GO" id="GO:0008270">
    <property type="term" value="F:zinc ion binding"/>
    <property type="evidence" value="ECO:0007669"/>
    <property type="project" value="UniProtKB-UniRule"/>
</dbReference>
<dbReference type="GO" id="GO:0000105">
    <property type="term" value="P:L-histidine biosynthetic process"/>
    <property type="evidence" value="ECO:0007669"/>
    <property type="project" value="UniProtKB-UniRule"/>
</dbReference>
<dbReference type="FunFam" id="3.10.20.810:FF:000001">
    <property type="entry name" value="Histidine biosynthesis bifunctional protein HisIE"/>
    <property type="match status" value="1"/>
</dbReference>
<dbReference type="Gene3D" id="3.10.20.810">
    <property type="entry name" value="Phosphoribosyl-AMP cyclohydrolase"/>
    <property type="match status" value="1"/>
</dbReference>
<dbReference type="HAMAP" id="MF_01021">
    <property type="entry name" value="HisI"/>
    <property type="match status" value="1"/>
</dbReference>
<dbReference type="InterPro" id="IPR026660">
    <property type="entry name" value="PRA-CH"/>
</dbReference>
<dbReference type="InterPro" id="IPR002496">
    <property type="entry name" value="PRib_AMP_CycHydrolase_dom"/>
</dbReference>
<dbReference type="InterPro" id="IPR038019">
    <property type="entry name" value="PRib_AMP_CycHydrolase_sf"/>
</dbReference>
<dbReference type="NCBIfam" id="NF000768">
    <property type="entry name" value="PRK00051.1"/>
    <property type="match status" value="1"/>
</dbReference>
<dbReference type="PANTHER" id="PTHR42945">
    <property type="entry name" value="HISTIDINE BIOSYNTHESIS BIFUNCTIONAL PROTEIN"/>
    <property type="match status" value="1"/>
</dbReference>
<dbReference type="PANTHER" id="PTHR42945:SF11">
    <property type="entry name" value="PHOSPHORIBOSYL-AMP CYCLOHYDROLASE"/>
    <property type="match status" value="1"/>
</dbReference>
<dbReference type="Pfam" id="PF01502">
    <property type="entry name" value="PRA-CH"/>
    <property type="match status" value="1"/>
</dbReference>
<dbReference type="SUPFAM" id="SSF141734">
    <property type="entry name" value="HisI-like"/>
    <property type="match status" value="1"/>
</dbReference>